<gene>
    <name evidence="1" type="primary">dtd</name>
    <name type="ordered locus">SAR1713</name>
</gene>
<proteinExistence type="inferred from homology"/>
<accession>Q6GG71</accession>
<feature type="chain" id="PRO_0000164589" description="D-aminoacyl-tRNA deacylase">
    <location>
        <begin position="1"/>
        <end position="150"/>
    </location>
</feature>
<feature type="short sequence motif" description="Gly-cisPro motif, important for rejection of L-amino acids" evidence="1">
    <location>
        <begin position="136"/>
        <end position="137"/>
    </location>
</feature>
<keyword id="KW-0963">Cytoplasm</keyword>
<keyword id="KW-0378">Hydrolase</keyword>
<keyword id="KW-0694">RNA-binding</keyword>
<keyword id="KW-0820">tRNA-binding</keyword>
<protein>
    <recommendedName>
        <fullName evidence="1">D-aminoacyl-tRNA deacylase</fullName>
        <shortName evidence="1">DTD</shortName>
        <ecNumber evidence="1">3.1.1.96</ecNumber>
    </recommendedName>
    <alternativeName>
        <fullName evidence="1">Gly-tRNA(Ala) deacylase</fullName>
    </alternativeName>
</protein>
<sequence>MKVVVQRVKEASVTNDTLNNQIKKGYCLLVGIGQDSTEQDADVIAKKIANARLFEDDNNKLNFNIQQMNGEILSVSQFTLYADVKKGNRPGFSNSKNPDQAVKIYEYFNDALRAYGLTVKTGEFGTHMNVNINNDGPVTIIYESQDGKIQ</sequence>
<dbReference type="EC" id="3.1.1.96" evidence="1"/>
<dbReference type="EMBL" id="BX571856">
    <property type="protein sequence ID" value="CAG40704.1"/>
    <property type="molecule type" value="Genomic_DNA"/>
</dbReference>
<dbReference type="RefSeq" id="WP_000869979.1">
    <property type="nucleotide sequence ID" value="NC_002952.2"/>
</dbReference>
<dbReference type="SMR" id="Q6GG71"/>
<dbReference type="KEGG" id="sar:SAR1713"/>
<dbReference type="HOGENOM" id="CLU_076901_1_0_9"/>
<dbReference type="Proteomes" id="UP000000596">
    <property type="component" value="Chromosome"/>
</dbReference>
<dbReference type="GO" id="GO:0005737">
    <property type="term" value="C:cytoplasm"/>
    <property type="evidence" value="ECO:0007669"/>
    <property type="project" value="UniProtKB-SubCell"/>
</dbReference>
<dbReference type="GO" id="GO:0051500">
    <property type="term" value="F:D-tyrosyl-tRNA(Tyr) deacylase activity"/>
    <property type="evidence" value="ECO:0007669"/>
    <property type="project" value="TreeGrafter"/>
</dbReference>
<dbReference type="GO" id="GO:0106026">
    <property type="term" value="F:Gly-tRNA(Ala) deacylase activity"/>
    <property type="evidence" value="ECO:0007669"/>
    <property type="project" value="UniProtKB-UniRule"/>
</dbReference>
<dbReference type="GO" id="GO:0043908">
    <property type="term" value="F:Ser(Gly)-tRNA(Ala) hydrolase activity"/>
    <property type="evidence" value="ECO:0007669"/>
    <property type="project" value="UniProtKB-UniRule"/>
</dbReference>
<dbReference type="GO" id="GO:0000049">
    <property type="term" value="F:tRNA binding"/>
    <property type="evidence" value="ECO:0007669"/>
    <property type="project" value="UniProtKB-UniRule"/>
</dbReference>
<dbReference type="GO" id="GO:0019478">
    <property type="term" value="P:D-amino acid catabolic process"/>
    <property type="evidence" value="ECO:0007669"/>
    <property type="project" value="UniProtKB-UniRule"/>
</dbReference>
<dbReference type="FunFam" id="3.50.80.10:FF:000005">
    <property type="entry name" value="D-aminoacyl-tRNA deacylase"/>
    <property type="match status" value="1"/>
</dbReference>
<dbReference type="Gene3D" id="3.50.80.10">
    <property type="entry name" value="D-tyrosyl-tRNA(Tyr) deacylase"/>
    <property type="match status" value="1"/>
</dbReference>
<dbReference type="HAMAP" id="MF_00518">
    <property type="entry name" value="Deacylase_Dtd"/>
    <property type="match status" value="1"/>
</dbReference>
<dbReference type="InterPro" id="IPR003732">
    <property type="entry name" value="Daa-tRNA_deacyls_DTD"/>
</dbReference>
<dbReference type="InterPro" id="IPR023509">
    <property type="entry name" value="DTD-like_sf"/>
</dbReference>
<dbReference type="NCBIfam" id="TIGR00256">
    <property type="entry name" value="D-aminoacyl-tRNA deacylase"/>
    <property type="match status" value="1"/>
</dbReference>
<dbReference type="PANTHER" id="PTHR10472:SF5">
    <property type="entry name" value="D-AMINOACYL-TRNA DEACYLASE 1"/>
    <property type="match status" value="1"/>
</dbReference>
<dbReference type="PANTHER" id="PTHR10472">
    <property type="entry name" value="D-TYROSYL-TRNA TYR DEACYLASE"/>
    <property type="match status" value="1"/>
</dbReference>
<dbReference type="Pfam" id="PF02580">
    <property type="entry name" value="Tyr_Deacylase"/>
    <property type="match status" value="1"/>
</dbReference>
<dbReference type="SUPFAM" id="SSF69500">
    <property type="entry name" value="DTD-like"/>
    <property type="match status" value="1"/>
</dbReference>
<comment type="function">
    <text evidence="1">An aminoacyl-tRNA editing enzyme that deacylates mischarged D-aminoacyl-tRNAs. Also deacylates mischarged glycyl-tRNA(Ala), protecting cells against glycine mischarging by AlaRS. Acts via tRNA-based rather than protein-based catalysis; rejects L-amino acids rather than detecting D-amino acids in the active site. By recycling D-aminoacyl-tRNA to D-amino acids and free tRNA molecules, this enzyme counteracts the toxicity associated with the formation of D-aminoacyl-tRNA entities in vivo and helps enforce protein L-homochirality.</text>
</comment>
<comment type="catalytic activity">
    <reaction evidence="1">
        <text>glycyl-tRNA(Ala) + H2O = tRNA(Ala) + glycine + H(+)</text>
        <dbReference type="Rhea" id="RHEA:53744"/>
        <dbReference type="Rhea" id="RHEA-COMP:9657"/>
        <dbReference type="Rhea" id="RHEA-COMP:13640"/>
        <dbReference type="ChEBI" id="CHEBI:15377"/>
        <dbReference type="ChEBI" id="CHEBI:15378"/>
        <dbReference type="ChEBI" id="CHEBI:57305"/>
        <dbReference type="ChEBI" id="CHEBI:78442"/>
        <dbReference type="ChEBI" id="CHEBI:78522"/>
        <dbReference type="EC" id="3.1.1.96"/>
    </reaction>
</comment>
<comment type="catalytic activity">
    <reaction evidence="1">
        <text>a D-aminoacyl-tRNA + H2O = a tRNA + a D-alpha-amino acid + H(+)</text>
        <dbReference type="Rhea" id="RHEA:13953"/>
        <dbReference type="Rhea" id="RHEA-COMP:10123"/>
        <dbReference type="Rhea" id="RHEA-COMP:10124"/>
        <dbReference type="ChEBI" id="CHEBI:15377"/>
        <dbReference type="ChEBI" id="CHEBI:15378"/>
        <dbReference type="ChEBI" id="CHEBI:59871"/>
        <dbReference type="ChEBI" id="CHEBI:78442"/>
        <dbReference type="ChEBI" id="CHEBI:79333"/>
        <dbReference type="EC" id="3.1.1.96"/>
    </reaction>
</comment>
<comment type="subunit">
    <text evidence="1">Homodimer.</text>
</comment>
<comment type="subcellular location">
    <subcellularLocation>
        <location evidence="1">Cytoplasm</location>
    </subcellularLocation>
</comment>
<comment type="domain">
    <text evidence="1">A Gly-cisPro motif from one monomer fits into the active site of the other monomer to allow specific chiral rejection of L-amino acids.</text>
</comment>
<comment type="similarity">
    <text evidence="1">Belongs to the DTD family.</text>
</comment>
<evidence type="ECO:0000255" key="1">
    <source>
        <dbReference type="HAMAP-Rule" id="MF_00518"/>
    </source>
</evidence>
<name>DTD_STAAR</name>
<organism>
    <name type="scientific">Staphylococcus aureus (strain MRSA252)</name>
    <dbReference type="NCBI Taxonomy" id="282458"/>
    <lineage>
        <taxon>Bacteria</taxon>
        <taxon>Bacillati</taxon>
        <taxon>Bacillota</taxon>
        <taxon>Bacilli</taxon>
        <taxon>Bacillales</taxon>
        <taxon>Staphylococcaceae</taxon>
        <taxon>Staphylococcus</taxon>
    </lineage>
</organism>
<reference key="1">
    <citation type="journal article" date="2004" name="Proc. Natl. Acad. Sci. U.S.A.">
        <title>Complete genomes of two clinical Staphylococcus aureus strains: evidence for the rapid evolution of virulence and drug resistance.</title>
        <authorList>
            <person name="Holden M.T.G."/>
            <person name="Feil E.J."/>
            <person name="Lindsay J.A."/>
            <person name="Peacock S.J."/>
            <person name="Day N.P.J."/>
            <person name="Enright M.C."/>
            <person name="Foster T.J."/>
            <person name="Moore C.E."/>
            <person name="Hurst L."/>
            <person name="Atkin R."/>
            <person name="Barron A."/>
            <person name="Bason N."/>
            <person name="Bentley S.D."/>
            <person name="Chillingworth C."/>
            <person name="Chillingworth T."/>
            <person name="Churcher C."/>
            <person name="Clark L."/>
            <person name="Corton C."/>
            <person name="Cronin A."/>
            <person name="Doggett J."/>
            <person name="Dowd L."/>
            <person name="Feltwell T."/>
            <person name="Hance Z."/>
            <person name="Harris B."/>
            <person name="Hauser H."/>
            <person name="Holroyd S."/>
            <person name="Jagels K."/>
            <person name="James K.D."/>
            <person name="Lennard N."/>
            <person name="Line A."/>
            <person name="Mayes R."/>
            <person name="Moule S."/>
            <person name="Mungall K."/>
            <person name="Ormond D."/>
            <person name="Quail M.A."/>
            <person name="Rabbinowitsch E."/>
            <person name="Rutherford K.M."/>
            <person name="Sanders M."/>
            <person name="Sharp S."/>
            <person name="Simmonds M."/>
            <person name="Stevens K."/>
            <person name="Whitehead S."/>
            <person name="Barrell B.G."/>
            <person name="Spratt B.G."/>
            <person name="Parkhill J."/>
        </authorList>
    </citation>
    <scope>NUCLEOTIDE SEQUENCE [LARGE SCALE GENOMIC DNA]</scope>
    <source>
        <strain>MRSA252</strain>
    </source>
</reference>